<gene>
    <name type="primary">Eef1a2</name>
    <name type="synonym">Eef1al</name>
    <name type="synonym">Stn</name>
    <name type="synonym">Stnl</name>
</gene>
<protein>
    <recommendedName>
        <fullName>Elongation factor 1-alpha 2</fullName>
        <shortName>EF-1-alpha-2</shortName>
        <ecNumber evidence="4">3.6.5.-</ecNumber>
    </recommendedName>
    <alternativeName>
        <fullName>Eukaryotic elongation factor 1 A-2</fullName>
        <shortName>eEF1A-2</shortName>
    </alternativeName>
    <alternativeName>
        <fullName>Statin-S1</fullName>
    </alternativeName>
</protein>
<organism>
    <name type="scientific">Rattus norvegicus</name>
    <name type="common">Rat</name>
    <dbReference type="NCBI Taxonomy" id="10116"/>
    <lineage>
        <taxon>Eukaryota</taxon>
        <taxon>Metazoa</taxon>
        <taxon>Chordata</taxon>
        <taxon>Craniata</taxon>
        <taxon>Vertebrata</taxon>
        <taxon>Euteleostomi</taxon>
        <taxon>Mammalia</taxon>
        <taxon>Eutheria</taxon>
        <taxon>Euarchontoglires</taxon>
        <taxon>Glires</taxon>
        <taxon>Rodentia</taxon>
        <taxon>Myomorpha</taxon>
        <taxon>Muroidea</taxon>
        <taxon>Muridae</taxon>
        <taxon>Murinae</taxon>
        <taxon>Rattus</taxon>
    </lineage>
</organism>
<reference key="1">
    <citation type="journal article" date="1991" name="J. Biol. Chem.">
        <title>Isolation and characterization of the rat chromosomal gene for a polypeptide (pS1) antigenically related to statin.</title>
        <authorList>
            <person name="Ann D.K."/>
            <person name="Moutsatsos I.K."/>
            <person name="Nakamura T."/>
            <person name="Lin H.H."/>
            <person name="Mao P.-L."/>
            <person name="Lee M.-J."/>
            <person name="Chin S."/>
            <person name="Liem R.K.H."/>
            <person name="Wang E."/>
        </authorList>
    </citation>
    <scope>NUCLEOTIDE SEQUENCE [MRNA]</scope>
    <source>
        <strain>Sprague-Dawley</strain>
        <tissue>Brain</tissue>
    </source>
</reference>
<reference key="2">
    <citation type="journal article" date="2004" name="Genome Res.">
        <title>The status, quality, and expansion of the NIH full-length cDNA project: the Mammalian Gene Collection (MGC).</title>
        <authorList>
            <consortium name="The MGC Project Team"/>
        </authorList>
    </citation>
    <scope>NUCLEOTIDE SEQUENCE [LARGE SCALE MRNA]</scope>
    <source>
        <tissue>Heart</tissue>
    </source>
</reference>
<reference key="3">
    <citation type="journal article" date="2012" name="Nat. Commun.">
        <title>Quantitative maps of protein phosphorylation sites across 14 different rat organs and tissues.</title>
        <authorList>
            <person name="Lundby A."/>
            <person name="Secher A."/>
            <person name="Lage K."/>
            <person name="Nordsborg N.B."/>
            <person name="Dmytriyev A."/>
            <person name="Lundby C."/>
            <person name="Olsen J.V."/>
        </authorList>
    </citation>
    <scope>PHOSPHORYLATION [LARGE SCALE ANALYSIS] AT SER-224</scope>
    <scope>IDENTIFICATION BY MASS SPECTROMETRY [LARGE SCALE ANALYSIS]</scope>
</reference>
<evidence type="ECO:0000250" key="1">
    <source>
        <dbReference type="UniProtKB" id="P62631"/>
    </source>
</evidence>
<evidence type="ECO:0000250" key="2">
    <source>
        <dbReference type="UniProtKB" id="P68104"/>
    </source>
</evidence>
<evidence type="ECO:0000250" key="3">
    <source>
        <dbReference type="UniProtKB" id="Q05639"/>
    </source>
</evidence>
<evidence type="ECO:0000250" key="4">
    <source>
        <dbReference type="UniProtKB" id="Q71V39"/>
    </source>
</evidence>
<evidence type="ECO:0000255" key="5"/>
<evidence type="ECO:0000256" key="6">
    <source>
        <dbReference type="SAM" id="MobiDB-lite"/>
    </source>
</evidence>
<evidence type="ECO:0000305" key="7"/>
<evidence type="ECO:0007744" key="8">
    <source>
    </source>
</evidence>
<comment type="function">
    <text evidence="2 4">Translation elongation factor that catalyzes the GTP-dependent binding of aminoacyl-tRNA (aa-tRNA) to the A-site of ribosomes during the elongation phase of protein synthesis. Base pairing between the mRNA codon and the aa-tRNA anticodon promotes GTP hydrolysis, releasing the aa-tRNA from EEF1A1 and allowing its accommodation into the ribosome (By similarity). The growing protein chain is subsequently transferred from the P-site peptidyl tRNA to the A-site aa-tRNA, extending it by one amino acid through ribosome-catalyzed peptide bond formation (By similarity).</text>
</comment>
<comment type="catalytic activity">
    <reaction evidence="4">
        <text>GTP + H2O = GDP + phosphate + H(+)</text>
        <dbReference type="Rhea" id="RHEA:19669"/>
        <dbReference type="ChEBI" id="CHEBI:15377"/>
        <dbReference type="ChEBI" id="CHEBI:15378"/>
        <dbReference type="ChEBI" id="CHEBI:37565"/>
        <dbReference type="ChEBI" id="CHEBI:43474"/>
        <dbReference type="ChEBI" id="CHEBI:58189"/>
    </reaction>
    <physiologicalReaction direction="left-to-right" evidence="4">
        <dbReference type="Rhea" id="RHEA:19670"/>
    </physiologicalReaction>
</comment>
<comment type="subunit">
    <text evidence="4">Homodimer; arranged in a 'head to tail' dimer configuration.</text>
</comment>
<comment type="subcellular location">
    <subcellularLocation>
        <location evidence="3">Endoplasmic reticulum membrane</location>
    </subcellularLocation>
</comment>
<comment type="PTM">
    <text evidence="3">Trimethylated at Lys-165 by EEF1AKMT3. Mono-, di-, and trimethylated at Lys-36 by EEF1AKMT4; trimethylated form is predominant. Methylation by EEF1AKMT4 contributes to the fine-tuning of translation rates for a subset of tRNAs. Trimethylated at the N-terminus and dimethylated at Lys-55 by METTL13.</text>
</comment>
<comment type="similarity">
    <text evidence="7">Belongs to the TRAFAC class translation factor GTPase superfamily. Classic translation factor GTPase family. EF-Tu/EF-1A subfamily.</text>
</comment>
<proteinExistence type="evidence at protein level"/>
<sequence length="463" mass="50454">MGKEKTHINIVVIGHVDSGKSTTTGHLIYKCGGIDKRTIEKFEKEAAEMGKGSFKYAWVLDKLKAERERGITIDISLWKFETTKYYITIIDAPGHRDFIKNMITGTSQADCAVLIVAAGVGEFEAGISKNGQTREHALLAYTLGVKQLIVGVNKMDSTEPAYSEKRYDEIVKEVSAYIKKIGYNPATVPFVPISGWHGDNMLEPSPNMPWFKGWKVERKEGNASGVSLLEALDTILPPTRPTDKPLRLPLQDVYKIGGIGTVPVGRVETGILRPGMVVTFAPVNITTEVKSVEMHHEALSEALPGDNVGFNVKNVSVKDIRRGNVCGDSKADPPQEAAQFTSQVIILNHPGQISAGYSPVIDCHTAHIACKFAELKEKIDRRSGKKLEDNPKSLKSGDAAIVEMVPGKPMCVESFSQYPPLGRFAVRDMRQTVAVGVIKNVEKKSGGAGKVTKSAQKAQKAGK</sequence>
<dbReference type="EC" id="3.6.5.-" evidence="4"/>
<dbReference type="EMBL" id="M62751">
    <property type="protein sequence ID" value="AAA41966.1"/>
    <property type="molecule type" value="mRNA"/>
</dbReference>
<dbReference type="EMBL" id="M62752">
    <property type="protein sequence ID" value="AAA41967.1"/>
    <property type="molecule type" value="Genomic_DNA"/>
</dbReference>
<dbReference type="EMBL" id="BC074016">
    <property type="protein sequence ID" value="AAH74016.1"/>
    <property type="molecule type" value="mRNA"/>
</dbReference>
<dbReference type="PIR" id="A40389">
    <property type="entry name" value="A40389"/>
</dbReference>
<dbReference type="RefSeq" id="NP_036792.2">
    <property type="nucleotide sequence ID" value="NM_012660.2"/>
</dbReference>
<dbReference type="RefSeq" id="XP_017446964.1">
    <property type="nucleotide sequence ID" value="XM_017591475.1"/>
</dbReference>
<dbReference type="SMR" id="P62632"/>
<dbReference type="BioGRID" id="246922">
    <property type="interactions" value="6"/>
</dbReference>
<dbReference type="CORUM" id="P62632"/>
<dbReference type="FunCoup" id="P62632">
    <property type="interactions" value="1116"/>
</dbReference>
<dbReference type="IntAct" id="P62632">
    <property type="interactions" value="3"/>
</dbReference>
<dbReference type="MINT" id="P62632"/>
<dbReference type="STRING" id="10116.ENSRNOP00000016947"/>
<dbReference type="GlyGen" id="P62632">
    <property type="glycosylation" value="1 site, 1 O-linked glycan (1 site)"/>
</dbReference>
<dbReference type="iPTMnet" id="P62632"/>
<dbReference type="PhosphoSitePlus" id="P62632"/>
<dbReference type="SwissPalm" id="P62632"/>
<dbReference type="jPOST" id="P62632"/>
<dbReference type="PaxDb" id="10116-ENSRNOP00000016947"/>
<dbReference type="GeneID" id="24799"/>
<dbReference type="KEGG" id="rno:24799"/>
<dbReference type="UCSC" id="RGD:3781">
    <property type="organism name" value="rat"/>
</dbReference>
<dbReference type="AGR" id="RGD:3781"/>
<dbReference type="CTD" id="1917"/>
<dbReference type="RGD" id="3781">
    <property type="gene designation" value="Eef1a2"/>
</dbReference>
<dbReference type="VEuPathDB" id="HostDB:ENSRNOG00000011624"/>
<dbReference type="eggNOG" id="KOG0052">
    <property type="taxonomic scope" value="Eukaryota"/>
</dbReference>
<dbReference type="HOGENOM" id="CLU_007265_3_5_1"/>
<dbReference type="InParanoid" id="P62632"/>
<dbReference type="OrthoDB" id="19921at9989"/>
<dbReference type="PhylomeDB" id="P62632"/>
<dbReference type="TreeFam" id="TF300304"/>
<dbReference type="PRO" id="PR:P62632"/>
<dbReference type="Proteomes" id="UP000002494">
    <property type="component" value="Chromosome 3"/>
</dbReference>
<dbReference type="Bgee" id="ENSRNOG00000012477">
    <property type="expression patterns" value="Expressed in skeletal muscle tissue and 17 other cell types or tissues"/>
</dbReference>
<dbReference type="GO" id="GO:0005737">
    <property type="term" value="C:cytoplasm"/>
    <property type="evidence" value="ECO:0000266"/>
    <property type="project" value="RGD"/>
</dbReference>
<dbReference type="GO" id="GO:0005789">
    <property type="term" value="C:endoplasmic reticulum membrane"/>
    <property type="evidence" value="ECO:0000250"/>
    <property type="project" value="UniProtKB"/>
</dbReference>
<dbReference type="GO" id="GO:0005853">
    <property type="term" value="C:eukaryotic translation elongation factor 1 complex"/>
    <property type="evidence" value="ECO:0000266"/>
    <property type="project" value="RGD"/>
</dbReference>
<dbReference type="GO" id="GO:0098982">
    <property type="term" value="C:GABA-ergic synapse"/>
    <property type="evidence" value="ECO:0000314"/>
    <property type="project" value="SynGO"/>
</dbReference>
<dbReference type="GO" id="GO:0043025">
    <property type="term" value="C:neuronal cell body"/>
    <property type="evidence" value="ECO:0000314"/>
    <property type="project" value="RGD"/>
</dbReference>
<dbReference type="GO" id="GO:0045202">
    <property type="term" value="C:synapse"/>
    <property type="evidence" value="ECO:0000266"/>
    <property type="project" value="RGD"/>
</dbReference>
<dbReference type="GO" id="GO:0005525">
    <property type="term" value="F:GTP binding"/>
    <property type="evidence" value="ECO:0007669"/>
    <property type="project" value="UniProtKB-KW"/>
</dbReference>
<dbReference type="GO" id="GO:0003924">
    <property type="term" value="F:GTPase activity"/>
    <property type="evidence" value="ECO:0000250"/>
    <property type="project" value="UniProtKB"/>
</dbReference>
<dbReference type="GO" id="GO:0019901">
    <property type="term" value="F:protein kinase binding"/>
    <property type="evidence" value="ECO:0000266"/>
    <property type="project" value="RGD"/>
</dbReference>
<dbReference type="GO" id="GO:0003746">
    <property type="term" value="F:translation elongation factor activity"/>
    <property type="evidence" value="ECO:0000250"/>
    <property type="project" value="UniProtKB"/>
</dbReference>
<dbReference type="GO" id="GO:0043065">
    <property type="term" value="P:positive regulation of apoptotic process"/>
    <property type="evidence" value="ECO:0000266"/>
    <property type="project" value="RGD"/>
</dbReference>
<dbReference type="GO" id="GO:0099150">
    <property type="term" value="P:regulation of postsynaptic specialization assembly"/>
    <property type="evidence" value="ECO:0000314"/>
    <property type="project" value="SynGO"/>
</dbReference>
<dbReference type="GO" id="GO:0051602">
    <property type="term" value="P:response to electrical stimulus"/>
    <property type="evidence" value="ECO:0000270"/>
    <property type="project" value="RGD"/>
</dbReference>
<dbReference type="GO" id="GO:0006412">
    <property type="term" value="P:translation"/>
    <property type="evidence" value="ECO:0000318"/>
    <property type="project" value="GO_Central"/>
</dbReference>
<dbReference type="GO" id="GO:0006414">
    <property type="term" value="P:translational elongation"/>
    <property type="evidence" value="ECO:0000250"/>
    <property type="project" value="UniProtKB"/>
</dbReference>
<dbReference type="CDD" id="cd01883">
    <property type="entry name" value="EF1_alpha"/>
    <property type="match status" value="1"/>
</dbReference>
<dbReference type="CDD" id="cd03693">
    <property type="entry name" value="EF1_alpha_II"/>
    <property type="match status" value="1"/>
</dbReference>
<dbReference type="CDD" id="cd03705">
    <property type="entry name" value="EF1_alpha_III"/>
    <property type="match status" value="1"/>
</dbReference>
<dbReference type="FunFam" id="2.40.30.10:FF:000005">
    <property type="entry name" value="Elongation factor 1-alpha"/>
    <property type="match status" value="1"/>
</dbReference>
<dbReference type="FunFam" id="3.40.50.300:FF:000090">
    <property type="entry name" value="Elongation factor 1-alpha"/>
    <property type="match status" value="1"/>
</dbReference>
<dbReference type="FunFam" id="2.40.30.10:FF:000168">
    <property type="entry name" value="Elongation factor 1-alpha 2"/>
    <property type="match status" value="1"/>
</dbReference>
<dbReference type="Gene3D" id="3.40.50.300">
    <property type="entry name" value="P-loop containing nucleotide triphosphate hydrolases"/>
    <property type="match status" value="1"/>
</dbReference>
<dbReference type="Gene3D" id="2.40.30.10">
    <property type="entry name" value="Translation factors"/>
    <property type="match status" value="2"/>
</dbReference>
<dbReference type="HAMAP" id="MF_00118_A">
    <property type="entry name" value="EF_Tu_A"/>
    <property type="match status" value="1"/>
</dbReference>
<dbReference type="InterPro" id="IPR004161">
    <property type="entry name" value="EFTu-like_2"/>
</dbReference>
<dbReference type="InterPro" id="IPR031157">
    <property type="entry name" value="G_TR_CS"/>
</dbReference>
<dbReference type="InterPro" id="IPR054696">
    <property type="entry name" value="GTP-eEF1A_C"/>
</dbReference>
<dbReference type="InterPro" id="IPR027417">
    <property type="entry name" value="P-loop_NTPase"/>
</dbReference>
<dbReference type="InterPro" id="IPR000795">
    <property type="entry name" value="T_Tr_GTP-bd_dom"/>
</dbReference>
<dbReference type="InterPro" id="IPR050100">
    <property type="entry name" value="TRAFAC_GTPase_members"/>
</dbReference>
<dbReference type="InterPro" id="IPR009000">
    <property type="entry name" value="Transl_B-barrel_sf"/>
</dbReference>
<dbReference type="InterPro" id="IPR009001">
    <property type="entry name" value="Transl_elong_EF1A/Init_IF2_C"/>
</dbReference>
<dbReference type="InterPro" id="IPR004539">
    <property type="entry name" value="Transl_elong_EF1A_euk/arc"/>
</dbReference>
<dbReference type="NCBIfam" id="TIGR00483">
    <property type="entry name" value="EF-1_alpha"/>
    <property type="match status" value="1"/>
</dbReference>
<dbReference type="NCBIfam" id="NF008969">
    <property type="entry name" value="PRK12317.1"/>
    <property type="match status" value="1"/>
</dbReference>
<dbReference type="PANTHER" id="PTHR23115">
    <property type="entry name" value="TRANSLATION FACTOR"/>
    <property type="match status" value="1"/>
</dbReference>
<dbReference type="Pfam" id="PF22594">
    <property type="entry name" value="GTP-eEF1A_C"/>
    <property type="match status" value="1"/>
</dbReference>
<dbReference type="Pfam" id="PF00009">
    <property type="entry name" value="GTP_EFTU"/>
    <property type="match status" value="1"/>
</dbReference>
<dbReference type="Pfam" id="PF03144">
    <property type="entry name" value="GTP_EFTU_D2"/>
    <property type="match status" value="1"/>
</dbReference>
<dbReference type="PRINTS" id="PR00315">
    <property type="entry name" value="ELONGATNFCT"/>
</dbReference>
<dbReference type="SUPFAM" id="SSF50465">
    <property type="entry name" value="EF-Tu/eEF-1alpha/eIF2-gamma C-terminal domain"/>
    <property type="match status" value="1"/>
</dbReference>
<dbReference type="SUPFAM" id="SSF52540">
    <property type="entry name" value="P-loop containing nucleoside triphosphate hydrolases"/>
    <property type="match status" value="1"/>
</dbReference>
<dbReference type="SUPFAM" id="SSF50447">
    <property type="entry name" value="Translation proteins"/>
    <property type="match status" value="1"/>
</dbReference>
<dbReference type="PROSITE" id="PS00301">
    <property type="entry name" value="G_TR_1"/>
    <property type="match status" value="1"/>
</dbReference>
<dbReference type="PROSITE" id="PS51722">
    <property type="entry name" value="G_TR_2"/>
    <property type="match status" value="1"/>
</dbReference>
<name>EF1A2_RAT</name>
<feature type="initiator methionine" description="Removed" evidence="1">
    <location>
        <position position="1"/>
    </location>
</feature>
<feature type="chain" id="PRO_0000090894" description="Elongation factor 1-alpha 2">
    <location>
        <begin position="2"/>
        <end position="463"/>
    </location>
</feature>
<feature type="domain" description="tr-type G">
    <location>
        <begin position="5"/>
        <end position="242"/>
    </location>
</feature>
<feature type="region of interest" description="G1" evidence="5">
    <location>
        <begin position="14"/>
        <end position="21"/>
    </location>
</feature>
<feature type="region of interest" description="G2" evidence="5">
    <location>
        <begin position="70"/>
        <end position="74"/>
    </location>
</feature>
<feature type="region of interest" description="G3" evidence="5">
    <location>
        <begin position="91"/>
        <end position="94"/>
    </location>
</feature>
<feature type="region of interest" description="G4" evidence="5">
    <location>
        <begin position="153"/>
        <end position="156"/>
    </location>
</feature>
<feature type="region of interest" description="G5" evidence="5">
    <location>
        <begin position="194"/>
        <end position="196"/>
    </location>
</feature>
<feature type="region of interest" description="Disordered" evidence="6">
    <location>
        <begin position="444"/>
        <end position="463"/>
    </location>
</feature>
<feature type="binding site" evidence="4">
    <location>
        <position position="17"/>
    </location>
    <ligand>
        <name>GTP</name>
        <dbReference type="ChEBI" id="CHEBI:37565"/>
    </ligand>
</feature>
<feature type="binding site" evidence="4">
    <location>
        <position position="17"/>
    </location>
    <ligand>
        <name>Mg(2+)</name>
        <dbReference type="ChEBI" id="CHEBI:18420"/>
    </ligand>
</feature>
<feature type="binding site" evidence="4">
    <location>
        <position position="18"/>
    </location>
    <ligand>
        <name>GTP</name>
        <dbReference type="ChEBI" id="CHEBI:37565"/>
    </ligand>
</feature>
<feature type="binding site" evidence="4">
    <location>
        <position position="19"/>
    </location>
    <ligand>
        <name>GTP</name>
        <dbReference type="ChEBI" id="CHEBI:37565"/>
    </ligand>
</feature>
<feature type="binding site" evidence="4">
    <location>
        <position position="20"/>
    </location>
    <ligand>
        <name>GTP</name>
        <dbReference type="ChEBI" id="CHEBI:37565"/>
    </ligand>
</feature>
<feature type="binding site" evidence="4">
    <location>
        <position position="21"/>
    </location>
    <ligand>
        <name>GTP</name>
        <dbReference type="ChEBI" id="CHEBI:37565"/>
    </ligand>
</feature>
<feature type="binding site" evidence="4">
    <location>
        <position position="22"/>
    </location>
    <ligand>
        <name>GTP</name>
        <dbReference type="ChEBI" id="CHEBI:37565"/>
    </ligand>
</feature>
<feature type="binding site" evidence="4">
    <location>
        <position position="153"/>
    </location>
    <ligand>
        <name>GTP</name>
        <dbReference type="ChEBI" id="CHEBI:37565"/>
    </ligand>
</feature>
<feature type="binding site" evidence="4">
    <location>
        <position position="154"/>
    </location>
    <ligand>
        <name>GTP</name>
        <dbReference type="ChEBI" id="CHEBI:37565"/>
    </ligand>
</feature>
<feature type="binding site" evidence="4">
    <location>
        <position position="156"/>
    </location>
    <ligand>
        <name>GTP</name>
        <dbReference type="ChEBI" id="CHEBI:37565"/>
    </ligand>
</feature>
<feature type="binding site" evidence="4">
    <location>
        <position position="194"/>
    </location>
    <ligand>
        <name>GTP</name>
        <dbReference type="ChEBI" id="CHEBI:37565"/>
    </ligand>
</feature>
<feature type="binding site" evidence="4">
    <location>
        <position position="195"/>
    </location>
    <ligand>
        <name>GTP</name>
        <dbReference type="ChEBI" id="CHEBI:37565"/>
    </ligand>
</feature>
<feature type="binding site" evidence="4">
    <location>
        <position position="196"/>
    </location>
    <ligand>
        <name>GTP</name>
        <dbReference type="ChEBI" id="CHEBI:37565"/>
    </ligand>
</feature>
<feature type="modified residue" description="N,N,N-trimethylglycine" evidence="2">
    <location>
        <position position="2"/>
    </location>
</feature>
<feature type="modified residue" description="N6,N6,N6-trimethyllysine; alternate" evidence="3">
    <location>
        <position position="36"/>
    </location>
</feature>
<feature type="modified residue" description="N6,N6-dimethyllysine; alternate" evidence="3">
    <location>
        <position position="36"/>
    </location>
</feature>
<feature type="modified residue" description="N6-methyllysine; alternate" evidence="3">
    <location>
        <position position="36"/>
    </location>
</feature>
<feature type="modified residue" description="N6,N6,N6-trimethyllysine" evidence="4">
    <location>
        <position position="55"/>
    </location>
</feature>
<feature type="modified residue" description="N6,N6-dimethyllysine" evidence="3">
    <location>
        <position position="55"/>
    </location>
</feature>
<feature type="modified residue" description="N6,N6,N6-trimethyllysine" evidence="3">
    <location>
        <position position="79"/>
    </location>
</feature>
<feature type="modified residue" description="Phosphoserine" evidence="4">
    <location>
        <position position="163"/>
    </location>
</feature>
<feature type="modified residue" description="N6,N6,N6-trimethyllysine; alternate; by EEF1AKMT3" evidence="3">
    <location>
        <position position="165"/>
    </location>
</feature>
<feature type="modified residue" description="N6,N6-dimethyllysine; alternate" evidence="3">
    <location>
        <position position="165"/>
    </location>
</feature>
<feature type="modified residue" description="N6-methyllysine; alternate" evidence="3">
    <location>
        <position position="165"/>
    </location>
</feature>
<feature type="modified residue" description="N6-acetyllysine" evidence="3">
    <location>
        <position position="179"/>
    </location>
</feature>
<feature type="modified residue" description="Phosphoserine" evidence="8">
    <location>
        <position position="224"/>
    </location>
</feature>
<feature type="modified residue" description="Phosphothreonine" evidence="4">
    <location>
        <position position="239"/>
    </location>
</feature>
<feature type="modified residue" description="5-glutamyl glycerylphosphorylethanolamine" evidence="4">
    <location>
        <position position="301"/>
    </location>
</feature>
<feature type="modified residue" description="5-glutamyl glycerylphosphorylethanolamine" evidence="4">
    <location>
        <position position="374"/>
    </location>
</feature>
<feature type="modified residue" description="N6-acetyllysine" evidence="3">
    <location>
        <position position="439"/>
    </location>
</feature>
<feature type="sequence conflict" description="In Ref. 1; AAA41967." evidence="7" ref="1">
    <original>RDM</original>
    <variation>ADT</variation>
    <location>
        <begin position="427"/>
        <end position="429"/>
    </location>
</feature>
<keyword id="KW-0007">Acetylation</keyword>
<keyword id="KW-0251">Elongation factor</keyword>
<keyword id="KW-0256">Endoplasmic reticulum</keyword>
<keyword id="KW-0342">GTP-binding</keyword>
<keyword id="KW-0378">Hydrolase</keyword>
<keyword id="KW-0460">Magnesium</keyword>
<keyword id="KW-0472">Membrane</keyword>
<keyword id="KW-0479">Metal-binding</keyword>
<keyword id="KW-0488">Methylation</keyword>
<keyword id="KW-0547">Nucleotide-binding</keyword>
<keyword id="KW-0597">Phosphoprotein</keyword>
<keyword id="KW-0648">Protein biosynthesis</keyword>
<keyword id="KW-1185">Reference proteome</keyword>
<accession>P62632</accession>
<accession>P27706</accession>